<keyword id="KW-0963">Cytoplasm</keyword>
<keyword id="KW-0489">Methyltransferase</keyword>
<keyword id="KW-0949">S-adenosyl-L-methionine</keyword>
<keyword id="KW-0808">Transferase</keyword>
<keyword id="KW-0819">tRNA processing</keyword>
<gene>
    <name evidence="1" type="primary">trmD</name>
    <name type="ordered locus">TGRD_019</name>
</gene>
<comment type="function">
    <text evidence="1">Specifically methylates guanosine-37 in various tRNAs.</text>
</comment>
<comment type="catalytic activity">
    <reaction evidence="1">
        <text>guanosine(37) in tRNA + S-adenosyl-L-methionine = N(1)-methylguanosine(37) in tRNA + S-adenosyl-L-homocysteine + H(+)</text>
        <dbReference type="Rhea" id="RHEA:36899"/>
        <dbReference type="Rhea" id="RHEA-COMP:10145"/>
        <dbReference type="Rhea" id="RHEA-COMP:10147"/>
        <dbReference type="ChEBI" id="CHEBI:15378"/>
        <dbReference type="ChEBI" id="CHEBI:57856"/>
        <dbReference type="ChEBI" id="CHEBI:59789"/>
        <dbReference type="ChEBI" id="CHEBI:73542"/>
        <dbReference type="ChEBI" id="CHEBI:74269"/>
        <dbReference type="EC" id="2.1.1.228"/>
    </reaction>
</comment>
<comment type="subunit">
    <text evidence="1">Homodimer.</text>
</comment>
<comment type="subcellular location">
    <subcellularLocation>
        <location evidence="1">Cytoplasm</location>
    </subcellularLocation>
</comment>
<comment type="similarity">
    <text evidence="1">Belongs to the RNA methyltransferase TrmD family.</text>
</comment>
<sequence>MKIDVLTIFPGMFKGPLTESLIGKAIEKEILKINIIDIRSFSKDKHKKVDDKSFGGGCGMVMKLEPLYDAIKSTGVKKKNSTYKNPYTKPYVIYMSPQGRILSDSIVKNLAKFKQLVIICGHYEGVDERTMNYVDEEISIGDYILTGGEIPAMVLIDSTARMLTGVVKEKSSVKNDSFYNNLLDYPHYTRPAVFKGYKIPEVLLSGDHKKISEWRVQESYKRTKERRPDLLKK</sequence>
<accession>B1GZ20</accession>
<evidence type="ECO:0000255" key="1">
    <source>
        <dbReference type="HAMAP-Rule" id="MF_00605"/>
    </source>
</evidence>
<organism>
    <name type="scientific">Endomicrobium trichonymphae</name>
    <dbReference type="NCBI Taxonomy" id="1408204"/>
    <lineage>
        <taxon>Bacteria</taxon>
        <taxon>Pseudomonadati</taxon>
        <taxon>Elusimicrobiota</taxon>
        <taxon>Endomicrobiia</taxon>
        <taxon>Endomicrobiales</taxon>
        <taxon>Endomicrobiaceae</taxon>
        <taxon>Candidatus Endomicrobiellum</taxon>
    </lineage>
</organism>
<reference key="1">
    <citation type="journal article" date="2008" name="Proc. Natl. Acad. Sci. U.S.A.">
        <title>Complete genome of the uncultured termite group 1 bacteria in a single host protist cell.</title>
        <authorList>
            <person name="Hongoh Y."/>
            <person name="Sharma V.K."/>
            <person name="Prakash T."/>
            <person name="Noda S."/>
            <person name="Taylor T.D."/>
            <person name="Kudo T."/>
            <person name="Sakaki Y."/>
            <person name="Toyoda A."/>
            <person name="Hattori M."/>
            <person name="Ohkuma M."/>
        </authorList>
    </citation>
    <scope>NUCLEOTIDE SEQUENCE [LARGE SCALE GENOMIC DNA]</scope>
</reference>
<proteinExistence type="inferred from homology"/>
<name>TRMD_ENDTX</name>
<protein>
    <recommendedName>
        <fullName evidence="1">tRNA (guanine-N(1)-)-methyltransferase</fullName>
        <ecNumber evidence="1">2.1.1.228</ecNumber>
    </recommendedName>
    <alternativeName>
        <fullName evidence="1">M1G-methyltransferase</fullName>
    </alternativeName>
    <alternativeName>
        <fullName evidence="1">tRNA [GM37] methyltransferase</fullName>
    </alternativeName>
</protein>
<dbReference type="EC" id="2.1.1.228" evidence="1"/>
<dbReference type="EMBL" id="AP009510">
    <property type="protein sequence ID" value="BAG13502.1"/>
    <property type="molecule type" value="Genomic_DNA"/>
</dbReference>
<dbReference type="RefSeq" id="WP_015423031.1">
    <property type="nucleotide sequence ID" value="NC_020419.1"/>
</dbReference>
<dbReference type="SMR" id="B1GZ20"/>
<dbReference type="STRING" id="471821.TGRD_019"/>
<dbReference type="KEGG" id="rsd:TGRD_019"/>
<dbReference type="PATRIC" id="fig|471821.5.peg.39"/>
<dbReference type="HOGENOM" id="CLU_047363_0_1_0"/>
<dbReference type="Proteomes" id="UP000001691">
    <property type="component" value="Chromosome"/>
</dbReference>
<dbReference type="GO" id="GO:0005829">
    <property type="term" value="C:cytosol"/>
    <property type="evidence" value="ECO:0007669"/>
    <property type="project" value="TreeGrafter"/>
</dbReference>
<dbReference type="GO" id="GO:0052906">
    <property type="term" value="F:tRNA (guanine(37)-N1)-methyltransferase activity"/>
    <property type="evidence" value="ECO:0007669"/>
    <property type="project" value="UniProtKB-UniRule"/>
</dbReference>
<dbReference type="GO" id="GO:0002939">
    <property type="term" value="P:tRNA N1-guanine methylation"/>
    <property type="evidence" value="ECO:0007669"/>
    <property type="project" value="TreeGrafter"/>
</dbReference>
<dbReference type="CDD" id="cd18080">
    <property type="entry name" value="TrmD-like"/>
    <property type="match status" value="1"/>
</dbReference>
<dbReference type="FunFam" id="1.10.1270.20:FF:000001">
    <property type="entry name" value="tRNA (guanine-N(1)-)-methyltransferase"/>
    <property type="match status" value="1"/>
</dbReference>
<dbReference type="FunFam" id="3.40.1280.10:FF:000001">
    <property type="entry name" value="tRNA (guanine-N(1)-)-methyltransferase"/>
    <property type="match status" value="1"/>
</dbReference>
<dbReference type="Gene3D" id="3.40.1280.10">
    <property type="match status" value="1"/>
</dbReference>
<dbReference type="Gene3D" id="1.10.1270.20">
    <property type="entry name" value="tRNA(m1g37)methyltransferase, domain 2"/>
    <property type="match status" value="1"/>
</dbReference>
<dbReference type="HAMAP" id="MF_00605">
    <property type="entry name" value="TrmD"/>
    <property type="match status" value="1"/>
</dbReference>
<dbReference type="InterPro" id="IPR029028">
    <property type="entry name" value="Alpha/beta_knot_MTases"/>
</dbReference>
<dbReference type="InterPro" id="IPR023148">
    <property type="entry name" value="tRNA_m1G_MeTrfase_C_sf"/>
</dbReference>
<dbReference type="InterPro" id="IPR002649">
    <property type="entry name" value="tRNA_m1G_MeTrfase_TrmD"/>
</dbReference>
<dbReference type="InterPro" id="IPR029026">
    <property type="entry name" value="tRNA_m1G_MTases_N"/>
</dbReference>
<dbReference type="InterPro" id="IPR016009">
    <property type="entry name" value="tRNA_MeTrfase_TRMD/TRM10"/>
</dbReference>
<dbReference type="NCBIfam" id="NF000648">
    <property type="entry name" value="PRK00026.1"/>
    <property type="match status" value="1"/>
</dbReference>
<dbReference type="NCBIfam" id="TIGR00088">
    <property type="entry name" value="trmD"/>
    <property type="match status" value="1"/>
</dbReference>
<dbReference type="PANTHER" id="PTHR46417">
    <property type="entry name" value="TRNA (GUANINE-N(1)-)-METHYLTRANSFERASE"/>
    <property type="match status" value="1"/>
</dbReference>
<dbReference type="PANTHER" id="PTHR46417:SF1">
    <property type="entry name" value="TRNA (GUANINE-N(1)-)-METHYLTRANSFERASE"/>
    <property type="match status" value="1"/>
</dbReference>
<dbReference type="Pfam" id="PF01746">
    <property type="entry name" value="tRNA_m1G_MT"/>
    <property type="match status" value="1"/>
</dbReference>
<dbReference type="PIRSF" id="PIRSF000386">
    <property type="entry name" value="tRNA_mtase"/>
    <property type="match status" value="1"/>
</dbReference>
<dbReference type="SUPFAM" id="SSF75217">
    <property type="entry name" value="alpha/beta knot"/>
    <property type="match status" value="1"/>
</dbReference>
<feature type="chain" id="PRO_1000130221" description="tRNA (guanine-N(1)-)-methyltransferase">
    <location>
        <begin position="1"/>
        <end position="233"/>
    </location>
</feature>
<feature type="binding site" evidence="1">
    <location>
        <position position="121"/>
    </location>
    <ligand>
        <name>S-adenosyl-L-methionine</name>
        <dbReference type="ChEBI" id="CHEBI:59789"/>
    </ligand>
</feature>
<feature type="binding site" evidence="1">
    <location>
        <begin position="140"/>
        <end position="145"/>
    </location>
    <ligand>
        <name>S-adenosyl-L-methionine</name>
        <dbReference type="ChEBI" id="CHEBI:59789"/>
    </ligand>
</feature>